<keyword id="KW-0963">Cytoplasm</keyword>
<keyword id="KW-0592">Phosphate transport</keyword>
<keyword id="KW-1185">Reference proteome</keyword>
<keyword id="KW-0813">Transport</keyword>
<organism>
    <name type="scientific">Synechocystis sp. (strain ATCC 27184 / PCC 6803 / Kazusa)</name>
    <dbReference type="NCBI Taxonomy" id="1111708"/>
    <lineage>
        <taxon>Bacteria</taxon>
        <taxon>Bacillati</taxon>
        <taxon>Cyanobacteriota</taxon>
        <taxon>Cyanophyceae</taxon>
        <taxon>Synechococcales</taxon>
        <taxon>Merismopediaceae</taxon>
        <taxon>Synechocystis</taxon>
    </lineage>
</organism>
<name>PHOU_SYNY3</name>
<proteinExistence type="inferred from homology"/>
<reference key="1">
    <citation type="journal article" date="1996" name="DNA Res.">
        <title>Sequence analysis of the genome of the unicellular cyanobacterium Synechocystis sp. strain PCC6803. II. Sequence determination of the entire genome and assignment of potential protein-coding regions.</title>
        <authorList>
            <person name="Kaneko T."/>
            <person name="Sato S."/>
            <person name="Kotani H."/>
            <person name="Tanaka A."/>
            <person name="Asamizu E."/>
            <person name="Nakamura Y."/>
            <person name="Miyajima N."/>
            <person name="Hirosawa M."/>
            <person name="Sugiura M."/>
            <person name="Sasamoto S."/>
            <person name="Kimura T."/>
            <person name="Hosouchi T."/>
            <person name="Matsuno A."/>
            <person name="Muraki A."/>
            <person name="Nakazaki N."/>
            <person name="Naruo K."/>
            <person name="Okumura S."/>
            <person name="Shimpo S."/>
            <person name="Takeuchi C."/>
            <person name="Wada T."/>
            <person name="Watanabe A."/>
            <person name="Yamada M."/>
            <person name="Yasuda M."/>
            <person name="Tabata S."/>
        </authorList>
    </citation>
    <scope>NUCLEOTIDE SEQUENCE [LARGE SCALE GENOMIC DNA]</scope>
    <source>
        <strain>ATCC 27184 / PCC 6803 / Kazusa</strain>
    </source>
</reference>
<sequence length="224" mass="25768">MAASLSQQINNPERSYFEQALKRVEQDVLRMGALVEESFRMSHQALFENRLETPLKIAELEKEIDRLYRHIEQECASFLTLQAPVAQDLRLLSAIMQLVRDLERIGDYAQDLGEIAMKLTRYPPHPCMDEIAAMAWQAQHMLDQSLVCLTQLDPNAGEIVKKMDDVVDDAYDRLYKTLAFQRDIKGVVEPILLMALVIRHLERMADHATNIAQRVSYIVTGKRE</sequence>
<protein>
    <recommendedName>
        <fullName>Phosphate-specific transport system accessory protein PhoU homolog</fullName>
        <shortName>Pst system accessory protein PhoU homolog</shortName>
    </recommendedName>
</protein>
<accession>P72686</accession>
<evidence type="ECO:0000250" key="1"/>
<evidence type="ECO:0000305" key="2"/>
<gene>
    <name type="primary">phoU</name>
    <name type="ordered locus">slr0741</name>
</gene>
<feature type="chain" id="PRO_0000155181" description="Phosphate-specific transport system accessory protein PhoU homolog">
    <location>
        <begin position="1"/>
        <end position="224"/>
    </location>
</feature>
<comment type="function">
    <text evidence="1">Plays a role in the regulation of phosphate uptake.</text>
</comment>
<comment type="subunit">
    <text evidence="1">Homodimer.</text>
</comment>
<comment type="subcellular location">
    <subcellularLocation>
        <location evidence="1">Cytoplasm</location>
    </subcellularLocation>
</comment>
<comment type="similarity">
    <text evidence="2">Belongs to the PhoU family.</text>
</comment>
<dbReference type="EMBL" id="BA000022">
    <property type="protein sequence ID" value="BAA16693.1"/>
    <property type="molecule type" value="Genomic_DNA"/>
</dbReference>
<dbReference type="PIR" id="S74541">
    <property type="entry name" value="S74541"/>
</dbReference>
<dbReference type="SMR" id="P72686"/>
<dbReference type="STRING" id="1148.gene:10497548"/>
<dbReference type="PaxDb" id="1148-1651765"/>
<dbReference type="EnsemblBacteria" id="BAA16693">
    <property type="protein sequence ID" value="BAA16693"/>
    <property type="gene ID" value="BAA16693"/>
</dbReference>
<dbReference type="KEGG" id="syn:slr0741"/>
<dbReference type="eggNOG" id="COG0704">
    <property type="taxonomic scope" value="Bacteria"/>
</dbReference>
<dbReference type="InParanoid" id="P72686"/>
<dbReference type="PhylomeDB" id="P72686"/>
<dbReference type="Proteomes" id="UP000001425">
    <property type="component" value="Chromosome"/>
</dbReference>
<dbReference type="GO" id="GO:0005737">
    <property type="term" value="C:cytoplasm"/>
    <property type="evidence" value="ECO:0000250"/>
    <property type="project" value="UniProtKB"/>
</dbReference>
<dbReference type="GO" id="GO:0042803">
    <property type="term" value="F:protein homodimerization activity"/>
    <property type="evidence" value="ECO:0000250"/>
    <property type="project" value="UniProtKB"/>
</dbReference>
<dbReference type="GO" id="GO:0030643">
    <property type="term" value="P:intracellular phosphate ion homeostasis"/>
    <property type="evidence" value="ECO:0007669"/>
    <property type="project" value="InterPro"/>
</dbReference>
<dbReference type="GO" id="GO:0045936">
    <property type="term" value="P:negative regulation of phosphate metabolic process"/>
    <property type="evidence" value="ECO:0000250"/>
    <property type="project" value="UniProtKB"/>
</dbReference>
<dbReference type="GO" id="GO:2000186">
    <property type="term" value="P:negative regulation of phosphate transmembrane transport"/>
    <property type="evidence" value="ECO:0000315"/>
    <property type="project" value="UniProtKB"/>
</dbReference>
<dbReference type="GO" id="GO:0006817">
    <property type="term" value="P:phosphate ion transport"/>
    <property type="evidence" value="ECO:0007669"/>
    <property type="project" value="UniProtKB-KW"/>
</dbReference>
<dbReference type="FunFam" id="1.20.58.220:FF:000004">
    <property type="entry name" value="Phosphate-specific transport system accessory protein PhoU"/>
    <property type="match status" value="1"/>
</dbReference>
<dbReference type="Gene3D" id="1.20.58.220">
    <property type="entry name" value="Phosphate transport system protein phou homolog 2, domain 2"/>
    <property type="match status" value="1"/>
</dbReference>
<dbReference type="InterPro" id="IPR028366">
    <property type="entry name" value="P_transport_PhoU"/>
</dbReference>
<dbReference type="InterPro" id="IPR038078">
    <property type="entry name" value="PhoU-like_sf"/>
</dbReference>
<dbReference type="InterPro" id="IPR026022">
    <property type="entry name" value="PhoU_dom"/>
</dbReference>
<dbReference type="NCBIfam" id="TIGR02135">
    <property type="entry name" value="phoU_full"/>
    <property type="match status" value="1"/>
</dbReference>
<dbReference type="PANTHER" id="PTHR42930">
    <property type="entry name" value="PHOSPHATE-SPECIFIC TRANSPORT SYSTEM ACCESSORY PROTEIN PHOU"/>
    <property type="match status" value="1"/>
</dbReference>
<dbReference type="PANTHER" id="PTHR42930:SF3">
    <property type="entry name" value="PHOSPHATE-SPECIFIC TRANSPORT SYSTEM ACCESSORY PROTEIN PHOU"/>
    <property type="match status" value="1"/>
</dbReference>
<dbReference type="Pfam" id="PF01895">
    <property type="entry name" value="PhoU"/>
    <property type="match status" value="2"/>
</dbReference>
<dbReference type="PIRSF" id="PIRSF003107">
    <property type="entry name" value="PhoU"/>
    <property type="match status" value="1"/>
</dbReference>
<dbReference type="SUPFAM" id="SSF109755">
    <property type="entry name" value="PhoU-like"/>
    <property type="match status" value="1"/>
</dbReference>